<dbReference type="EMBL" id="AE014134">
    <property type="protein sequence ID" value="AAF53038.1"/>
    <property type="molecule type" value="Genomic_DNA"/>
</dbReference>
<dbReference type="EMBL" id="AY122237">
    <property type="protein sequence ID" value="AAM52749.1"/>
    <property type="molecule type" value="mRNA"/>
</dbReference>
<dbReference type="RefSeq" id="NP_001285823.1">
    <property type="nucleotide sequence ID" value="NM_001298894.1"/>
</dbReference>
<dbReference type="RefSeq" id="NP_609475.1">
    <property type="nucleotide sequence ID" value="NM_135631.4"/>
</dbReference>
<dbReference type="PDB" id="5CHL">
    <property type="method" value="X-ray"/>
    <property type="resolution" value="1.89 A"/>
    <property type="chains" value="A=2-75"/>
</dbReference>
<dbReference type="PDBsum" id="5CHL"/>
<dbReference type="SMR" id="Q9VKM6"/>
<dbReference type="BioGRID" id="60585">
    <property type="interactions" value="21"/>
</dbReference>
<dbReference type="ComplexPortal" id="CPX-2264">
    <property type="entry name" value="NuA4 histone acetyltransferase complex"/>
</dbReference>
<dbReference type="ComplexPortal" id="CPX-2423">
    <property type="entry name" value="SWR1 chromatin remodelling complex"/>
</dbReference>
<dbReference type="FunCoup" id="Q9VKM6">
    <property type="interactions" value="2283"/>
</dbReference>
<dbReference type="IntAct" id="Q9VKM6">
    <property type="interactions" value="21"/>
</dbReference>
<dbReference type="STRING" id="7227.FBpp0309447"/>
<dbReference type="iPTMnet" id="Q9VKM6"/>
<dbReference type="PaxDb" id="7227-FBpp0079735"/>
<dbReference type="DNASU" id="34516"/>
<dbReference type="EnsemblMetazoa" id="FBtr0080146">
    <property type="protein sequence ID" value="FBpp0079735"/>
    <property type="gene ID" value="FBgn0032321"/>
</dbReference>
<dbReference type="EnsemblMetazoa" id="FBtr0340549">
    <property type="protein sequence ID" value="FBpp0309447"/>
    <property type="gene ID" value="FBgn0032321"/>
</dbReference>
<dbReference type="GeneID" id="34516"/>
<dbReference type="KEGG" id="dme:Dmel_CG4621"/>
<dbReference type="UCSC" id="CG4621-RA">
    <property type="organism name" value="d. melanogaster"/>
</dbReference>
<dbReference type="AGR" id="FB:FBgn0032321"/>
<dbReference type="CTD" id="34516"/>
<dbReference type="FlyBase" id="FBgn0032321">
    <property type="gene designation" value="YL-1"/>
</dbReference>
<dbReference type="VEuPathDB" id="VectorBase:FBgn0032321"/>
<dbReference type="eggNOG" id="KOG2897">
    <property type="taxonomic scope" value="Eukaryota"/>
</dbReference>
<dbReference type="HOGENOM" id="CLU_040862_0_0_1"/>
<dbReference type="InParanoid" id="Q9VKM6"/>
<dbReference type="OMA" id="TGPTIRY"/>
<dbReference type="OrthoDB" id="78296at2759"/>
<dbReference type="PhylomeDB" id="Q9VKM6"/>
<dbReference type="BioGRID-ORCS" id="34516">
    <property type="hits" value="0 hits in 1 CRISPR screen"/>
</dbReference>
<dbReference type="GenomeRNAi" id="34516"/>
<dbReference type="PRO" id="PR:Q9VKM6"/>
<dbReference type="Proteomes" id="UP000000803">
    <property type="component" value="Chromosome 2L"/>
</dbReference>
<dbReference type="Bgee" id="FBgn0032321">
    <property type="expression patterns" value="Expressed in eye disc (Drosophila) and 134 other cell types or tissues"/>
</dbReference>
<dbReference type="ExpressionAtlas" id="Q9VKM6">
    <property type="expression patterns" value="baseline and differential"/>
</dbReference>
<dbReference type="GO" id="GO:0035267">
    <property type="term" value="C:NuA4 histone acetyltransferase complex"/>
    <property type="evidence" value="ECO:0000353"/>
    <property type="project" value="UniProtKB"/>
</dbReference>
<dbReference type="GO" id="GO:0005634">
    <property type="term" value="C:nucleus"/>
    <property type="evidence" value="ECO:0000314"/>
    <property type="project" value="FlyBase"/>
</dbReference>
<dbReference type="GO" id="GO:0003677">
    <property type="term" value="F:DNA binding"/>
    <property type="evidence" value="ECO:0007669"/>
    <property type="project" value="UniProtKB-KW"/>
</dbReference>
<dbReference type="GO" id="GO:0140861">
    <property type="term" value="P:DNA repair-dependent chromatin remodeling"/>
    <property type="evidence" value="ECO:0000314"/>
    <property type="project" value="FlyBase"/>
</dbReference>
<dbReference type="GO" id="GO:0010629">
    <property type="term" value="P:negative regulation of gene expression"/>
    <property type="evidence" value="ECO:0000315"/>
    <property type="project" value="FlyBase"/>
</dbReference>
<dbReference type="InterPro" id="IPR013272">
    <property type="entry name" value="Vps72/YL1_C"/>
</dbReference>
<dbReference type="InterPro" id="IPR046757">
    <property type="entry name" value="YL1_N"/>
</dbReference>
<dbReference type="PANTHER" id="PTHR13275:SF4">
    <property type="entry name" value="VACUOLAR PROTEIN SORTING-ASSOCIATED PROTEIN 72 HOMOLOG"/>
    <property type="match status" value="1"/>
</dbReference>
<dbReference type="PANTHER" id="PTHR13275">
    <property type="entry name" value="YL-1 PROTEIN TRANSCRIPTION FACTOR-LIKE 1"/>
    <property type="match status" value="1"/>
</dbReference>
<dbReference type="Pfam" id="PF05764">
    <property type="entry name" value="YL1"/>
    <property type="match status" value="1"/>
</dbReference>
<dbReference type="Pfam" id="PF08265">
    <property type="entry name" value="YL1_C"/>
    <property type="match status" value="1"/>
</dbReference>
<dbReference type="SMART" id="SM00993">
    <property type="entry name" value="YL1_C"/>
    <property type="match status" value="1"/>
</dbReference>
<reference key="1">
    <citation type="journal article" date="2000" name="Science">
        <title>The genome sequence of Drosophila melanogaster.</title>
        <authorList>
            <person name="Adams M.D."/>
            <person name="Celniker S.E."/>
            <person name="Holt R.A."/>
            <person name="Evans C.A."/>
            <person name="Gocayne J.D."/>
            <person name="Amanatides P.G."/>
            <person name="Scherer S.E."/>
            <person name="Li P.W."/>
            <person name="Hoskins R.A."/>
            <person name="Galle R.F."/>
            <person name="George R.A."/>
            <person name="Lewis S.E."/>
            <person name="Richards S."/>
            <person name="Ashburner M."/>
            <person name="Henderson S.N."/>
            <person name="Sutton G.G."/>
            <person name="Wortman J.R."/>
            <person name="Yandell M.D."/>
            <person name="Zhang Q."/>
            <person name="Chen L.X."/>
            <person name="Brandon R.C."/>
            <person name="Rogers Y.-H.C."/>
            <person name="Blazej R.G."/>
            <person name="Champe M."/>
            <person name="Pfeiffer B.D."/>
            <person name="Wan K.H."/>
            <person name="Doyle C."/>
            <person name="Baxter E.G."/>
            <person name="Helt G."/>
            <person name="Nelson C.R."/>
            <person name="Miklos G.L.G."/>
            <person name="Abril J.F."/>
            <person name="Agbayani A."/>
            <person name="An H.-J."/>
            <person name="Andrews-Pfannkoch C."/>
            <person name="Baldwin D."/>
            <person name="Ballew R.M."/>
            <person name="Basu A."/>
            <person name="Baxendale J."/>
            <person name="Bayraktaroglu L."/>
            <person name="Beasley E.M."/>
            <person name="Beeson K.Y."/>
            <person name="Benos P.V."/>
            <person name="Berman B.P."/>
            <person name="Bhandari D."/>
            <person name="Bolshakov S."/>
            <person name="Borkova D."/>
            <person name="Botchan M.R."/>
            <person name="Bouck J."/>
            <person name="Brokstein P."/>
            <person name="Brottier P."/>
            <person name="Burtis K.C."/>
            <person name="Busam D.A."/>
            <person name="Butler H."/>
            <person name="Cadieu E."/>
            <person name="Center A."/>
            <person name="Chandra I."/>
            <person name="Cherry J.M."/>
            <person name="Cawley S."/>
            <person name="Dahlke C."/>
            <person name="Davenport L.B."/>
            <person name="Davies P."/>
            <person name="de Pablos B."/>
            <person name="Delcher A."/>
            <person name="Deng Z."/>
            <person name="Mays A.D."/>
            <person name="Dew I."/>
            <person name="Dietz S.M."/>
            <person name="Dodson K."/>
            <person name="Doup L.E."/>
            <person name="Downes M."/>
            <person name="Dugan-Rocha S."/>
            <person name="Dunkov B.C."/>
            <person name="Dunn P."/>
            <person name="Durbin K.J."/>
            <person name="Evangelista C.C."/>
            <person name="Ferraz C."/>
            <person name="Ferriera S."/>
            <person name="Fleischmann W."/>
            <person name="Fosler C."/>
            <person name="Gabrielian A.E."/>
            <person name="Garg N.S."/>
            <person name="Gelbart W.M."/>
            <person name="Glasser K."/>
            <person name="Glodek A."/>
            <person name="Gong F."/>
            <person name="Gorrell J.H."/>
            <person name="Gu Z."/>
            <person name="Guan P."/>
            <person name="Harris M."/>
            <person name="Harris N.L."/>
            <person name="Harvey D.A."/>
            <person name="Heiman T.J."/>
            <person name="Hernandez J.R."/>
            <person name="Houck J."/>
            <person name="Hostin D."/>
            <person name="Houston K.A."/>
            <person name="Howland T.J."/>
            <person name="Wei M.-H."/>
            <person name="Ibegwam C."/>
            <person name="Jalali M."/>
            <person name="Kalush F."/>
            <person name="Karpen G.H."/>
            <person name="Ke Z."/>
            <person name="Kennison J.A."/>
            <person name="Ketchum K.A."/>
            <person name="Kimmel B.E."/>
            <person name="Kodira C.D."/>
            <person name="Kraft C.L."/>
            <person name="Kravitz S."/>
            <person name="Kulp D."/>
            <person name="Lai Z."/>
            <person name="Lasko P."/>
            <person name="Lei Y."/>
            <person name="Levitsky A.A."/>
            <person name="Li J.H."/>
            <person name="Li Z."/>
            <person name="Liang Y."/>
            <person name="Lin X."/>
            <person name="Liu X."/>
            <person name="Mattei B."/>
            <person name="McIntosh T.C."/>
            <person name="McLeod M.P."/>
            <person name="McPherson D."/>
            <person name="Merkulov G."/>
            <person name="Milshina N.V."/>
            <person name="Mobarry C."/>
            <person name="Morris J."/>
            <person name="Moshrefi A."/>
            <person name="Mount S.M."/>
            <person name="Moy M."/>
            <person name="Murphy B."/>
            <person name="Murphy L."/>
            <person name="Muzny D.M."/>
            <person name="Nelson D.L."/>
            <person name="Nelson D.R."/>
            <person name="Nelson K.A."/>
            <person name="Nixon K."/>
            <person name="Nusskern D.R."/>
            <person name="Pacleb J.M."/>
            <person name="Palazzolo M."/>
            <person name="Pittman G.S."/>
            <person name="Pan S."/>
            <person name="Pollard J."/>
            <person name="Puri V."/>
            <person name="Reese M.G."/>
            <person name="Reinert K."/>
            <person name="Remington K."/>
            <person name="Saunders R.D.C."/>
            <person name="Scheeler F."/>
            <person name="Shen H."/>
            <person name="Shue B.C."/>
            <person name="Siden-Kiamos I."/>
            <person name="Simpson M."/>
            <person name="Skupski M.P."/>
            <person name="Smith T.J."/>
            <person name="Spier E."/>
            <person name="Spradling A.C."/>
            <person name="Stapleton M."/>
            <person name="Strong R."/>
            <person name="Sun E."/>
            <person name="Svirskas R."/>
            <person name="Tector C."/>
            <person name="Turner R."/>
            <person name="Venter E."/>
            <person name="Wang A.H."/>
            <person name="Wang X."/>
            <person name="Wang Z.-Y."/>
            <person name="Wassarman D.A."/>
            <person name="Weinstock G.M."/>
            <person name="Weissenbach J."/>
            <person name="Williams S.M."/>
            <person name="Woodage T."/>
            <person name="Worley K.C."/>
            <person name="Wu D."/>
            <person name="Yang S."/>
            <person name="Yao Q.A."/>
            <person name="Ye J."/>
            <person name="Yeh R.-F."/>
            <person name="Zaveri J.S."/>
            <person name="Zhan M."/>
            <person name="Zhang G."/>
            <person name="Zhao Q."/>
            <person name="Zheng L."/>
            <person name="Zheng X.H."/>
            <person name="Zhong F.N."/>
            <person name="Zhong W."/>
            <person name="Zhou X."/>
            <person name="Zhu S.C."/>
            <person name="Zhu X."/>
            <person name="Smith H.O."/>
            <person name="Gibbs R.A."/>
            <person name="Myers E.W."/>
            <person name="Rubin G.M."/>
            <person name="Venter J.C."/>
        </authorList>
    </citation>
    <scope>NUCLEOTIDE SEQUENCE [LARGE SCALE GENOMIC DNA]</scope>
    <source>
        <strain>Berkeley</strain>
    </source>
</reference>
<reference key="2">
    <citation type="journal article" date="2002" name="Genome Biol.">
        <title>Annotation of the Drosophila melanogaster euchromatic genome: a systematic review.</title>
        <authorList>
            <person name="Misra S."/>
            <person name="Crosby M.A."/>
            <person name="Mungall C.J."/>
            <person name="Matthews B.B."/>
            <person name="Campbell K.S."/>
            <person name="Hradecky P."/>
            <person name="Huang Y."/>
            <person name="Kaminker J.S."/>
            <person name="Millburn G.H."/>
            <person name="Prochnik S.E."/>
            <person name="Smith C.D."/>
            <person name="Tupy J.L."/>
            <person name="Whitfield E.J."/>
            <person name="Bayraktaroglu L."/>
            <person name="Berman B.P."/>
            <person name="Bettencourt B.R."/>
            <person name="Celniker S.E."/>
            <person name="de Grey A.D.N.J."/>
            <person name="Drysdale R.A."/>
            <person name="Harris N.L."/>
            <person name="Richter J."/>
            <person name="Russo S."/>
            <person name="Schroeder A.J."/>
            <person name="Shu S.Q."/>
            <person name="Stapleton M."/>
            <person name="Yamada C."/>
            <person name="Ashburner M."/>
            <person name="Gelbart W.M."/>
            <person name="Rubin G.M."/>
            <person name="Lewis S.E."/>
        </authorList>
    </citation>
    <scope>GENOME REANNOTATION</scope>
    <source>
        <strain>Berkeley</strain>
    </source>
</reference>
<reference key="3">
    <citation type="journal article" date="2002" name="Genome Biol.">
        <title>A Drosophila full-length cDNA resource.</title>
        <authorList>
            <person name="Stapleton M."/>
            <person name="Carlson J.W."/>
            <person name="Brokstein P."/>
            <person name="Yu C."/>
            <person name="Champe M."/>
            <person name="George R.A."/>
            <person name="Guarin H."/>
            <person name="Kronmiller B."/>
            <person name="Pacleb J.M."/>
            <person name="Park S."/>
            <person name="Wan K.H."/>
            <person name="Rubin G.M."/>
            <person name="Celniker S.E."/>
        </authorList>
    </citation>
    <scope>NUCLEOTIDE SEQUENCE [LARGE SCALE MRNA]</scope>
    <source>
        <strain>Berkeley</strain>
        <tissue>Head</tissue>
    </source>
</reference>
<reference key="4">
    <citation type="journal article" date="2004" name="Science">
        <title>Acetylation by Tip60 is required for selective histone variant exchange at DNA lesions.</title>
        <authorList>
            <person name="Kusch T."/>
            <person name="Florens L."/>
            <person name="Macdonald W.H."/>
            <person name="Swanson S.K."/>
            <person name="Glaser R.L."/>
            <person name="Yates J.R. III"/>
            <person name="Abmayr S.M."/>
            <person name="Washburn M.P."/>
            <person name="Workman J.L."/>
        </authorList>
    </citation>
    <scope>IDENTIFICATION IN THE TIP60 COMPLEX</scope>
    <scope>FUNCTION</scope>
</reference>
<reference key="5">
    <citation type="journal article" date="2005" name="Nat. Struct. Mol. Biol.">
        <title>Swc2 is a widely conserved H2AZ-binding module essential for ATP-dependent histone exchange.</title>
        <authorList>
            <person name="Wu W.-H."/>
            <person name="Alami S."/>
            <person name="Luk E."/>
            <person name="Wu C.-H."/>
            <person name="Sen S."/>
            <person name="Mizuguchi G."/>
            <person name="Wei D."/>
            <person name="Wu C."/>
        </authorList>
    </citation>
    <scope>FUNCTION</scope>
    <scope>PROBABLE INTERACTION WITH HIS2AV</scope>
</reference>
<reference key="6">
    <citation type="journal article" date="2008" name="J. Proteome Res.">
        <title>Phosphoproteome analysis of Drosophila melanogaster embryos.</title>
        <authorList>
            <person name="Zhai B."/>
            <person name="Villen J."/>
            <person name="Beausoleil S.A."/>
            <person name="Mintseris J."/>
            <person name="Gygi S.P."/>
        </authorList>
    </citation>
    <scope>PHOSPHORYLATION [LARGE SCALE ANALYSIS] AT SER-56; SER-59 AND SER-68</scope>
    <scope>IDENTIFICATION BY MASS SPECTROMETRY</scope>
    <source>
        <tissue>Embryo</tissue>
    </source>
</reference>
<feature type="chain" id="PRO_0000239006" description="Vacuolar protein sorting-associated protein 72 homolog">
    <location>
        <begin position="1"/>
        <end position="351"/>
    </location>
</feature>
<feature type="DNA-binding region" evidence="2">
    <location>
        <begin position="156"/>
        <end position="208"/>
    </location>
</feature>
<feature type="region of interest" description="Disordered" evidence="3">
    <location>
        <begin position="1"/>
        <end position="136"/>
    </location>
</feature>
<feature type="coiled-coil region" evidence="2">
    <location>
        <begin position="142"/>
        <end position="202"/>
    </location>
</feature>
<feature type="compositionally biased region" description="Acidic residues" evidence="3">
    <location>
        <begin position="36"/>
        <end position="72"/>
    </location>
</feature>
<feature type="compositionally biased region" description="Basic and acidic residues" evidence="3">
    <location>
        <begin position="87"/>
        <end position="100"/>
    </location>
</feature>
<feature type="compositionally biased region" description="Basic residues" evidence="3">
    <location>
        <begin position="105"/>
        <end position="121"/>
    </location>
</feature>
<feature type="modified residue" description="Phosphoserine" evidence="6">
    <location>
        <position position="56"/>
    </location>
</feature>
<feature type="modified residue" description="Phosphoserine" evidence="6">
    <location>
        <position position="59"/>
    </location>
</feature>
<feature type="modified residue" description="Phosphoserine" evidence="6">
    <location>
        <position position="68"/>
    </location>
</feature>
<feature type="turn" evidence="8">
    <location>
        <begin position="9"/>
        <end position="14"/>
    </location>
</feature>
<feature type="helix" evidence="8">
    <location>
        <begin position="15"/>
        <end position="30"/>
    </location>
</feature>
<feature type="helix" evidence="8">
    <location>
        <begin position="31"/>
        <end position="33"/>
    </location>
</feature>
<feature type="turn" evidence="8">
    <location>
        <begin position="56"/>
        <end position="59"/>
    </location>
</feature>
<feature type="turn" evidence="8">
    <location>
        <begin position="62"/>
        <end position="64"/>
    </location>
</feature>
<gene>
    <name type="primary">YL-1</name>
    <name type="ORF">CG4621</name>
</gene>
<comment type="function">
    <text evidence="4 5">Part of the Tip60 chromatin-remodeling complex which is involved in DNA repair. Upon induction of DNA double-strand breaks, this complex acetylates phosphorylated H2AV in nucleosomes and exchanges it with unmodified H2AV.</text>
</comment>
<comment type="subunit">
    <text evidence="4 7">Interacts with H2AV (Probable). Component of the Tip60 chromatin-remodeling complex which contains the catalytic subunit Tip60 and the subunits Domino, Tra1, Brd8, E(Pc), DMAP1, Pontin, Reptin, Ing3, Act87E, BAP55, Mrg15, MrgBP, Gas41 and YL-1.</text>
</comment>
<comment type="subcellular location">
    <subcellularLocation>
        <location evidence="1">Nucleus</location>
    </subcellularLocation>
</comment>
<comment type="similarity">
    <text evidence="7">Belongs to the VPS72/YL1 family.</text>
</comment>
<evidence type="ECO:0000250" key="1"/>
<evidence type="ECO:0000255" key="2"/>
<evidence type="ECO:0000256" key="3">
    <source>
        <dbReference type="SAM" id="MobiDB-lite"/>
    </source>
</evidence>
<evidence type="ECO:0000269" key="4">
    <source>
    </source>
</evidence>
<evidence type="ECO:0000269" key="5">
    <source>
    </source>
</evidence>
<evidence type="ECO:0000269" key="6">
    <source>
    </source>
</evidence>
<evidence type="ECO:0000305" key="7"/>
<evidence type="ECO:0007829" key="8">
    <source>
        <dbReference type="PDB" id="5CHL"/>
    </source>
</evidence>
<sequence>MAASRSRRNNAGNKIAHLLNEEEEDDFYKTSYGGFQEDEEDKEYEQKDEEEDVVDSDFSIDENDEPVSDQEEAPEKKRKRGVVNTKAYKETKPAVKKETKATPALHKKRPGGGVTKRRPRPRFTVLDSGRKSIRTSTAIKTQATKIRLKELDDARKRKKKKVRVEDYMPTQEELLEEAKITEEENTKSLEKFQKMELEKKKSRPTKRTFSGPTIRYHSLTMPAMRKPTRGANPAVDSKDLAGKCERTFVTIENDFNDKVFQSLFRHKAPPKASNGICPITRLPARYFDPITQQPYYSIQAFKILREAYYMQLEQQGGGSEQPELAKWLEWRKLVKENRLKASAAASKNGDN</sequence>
<name>VPS72_DROME</name>
<keyword id="KW-0002">3D-structure</keyword>
<keyword id="KW-0156">Chromatin regulator</keyword>
<keyword id="KW-0175">Coiled coil</keyword>
<keyword id="KW-0238">DNA-binding</keyword>
<keyword id="KW-0539">Nucleus</keyword>
<keyword id="KW-0597">Phosphoprotein</keyword>
<keyword id="KW-1185">Reference proteome</keyword>
<keyword id="KW-0804">Transcription</keyword>
<keyword id="KW-0805">Transcription regulation</keyword>
<organism>
    <name type="scientific">Drosophila melanogaster</name>
    <name type="common">Fruit fly</name>
    <dbReference type="NCBI Taxonomy" id="7227"/>
    <lineage>
        <taxon>Eukaryota</taxon>
        <taxon>Metazoa</taxon>
        <taxon>Ecdysozoa</taxon>
        <taxon>Arthropoda</taxon>
        <taxon>Hexapoda</taxon>
        <taxon>Insecta</taxon>
        <taxon>Pterygota</taxon>
        <taxon>Neoptera</taxon>
        <taxon>Endopterygota</taxon>
        <taxon>Diptera</taxon>
        <taxon>Brachycera</taxon>
        <taxon>Muscomorpha</taxon>
        <taxon>Ephydroidea</taxon>
        <taxon>Drosophilidae</taxon>
        <taxon>Drosophila</taxon>
        <taxon>Sophophora</taxon>
    </lineage>
</organism>
<protein>
    <recommendedName>
        <fullName>Vacuolar protein sorting-associated protein 72 homolog</fullName>
    </recommendedName>
    <alternativeName>
        <fullName>Protein YL-1</fullName>
    </alternativeName>
</protein>
<accession>Q9VKM6</accession>
<proteinExistence type="evidence at protein level"/>